<evidence type="ECO:0000255" key="1">
    <source>
        <dbReference type="HAMAP-Rule" id="MF_00344"/>
    </source>
</evidence>
<protein>
    <recommendedName>
        <fullName evidence="1">GMP synthase [glutamine-hydrolyzing]</fullName>
        <ecNumber evidence="1">6.3.5.2</ecNumber>
    </recommendedName>
    <alternativeName>
        <fullName evidence="1">GMP synthetase</fullName>
    </alternativeName>
    <alternativeName>
        <fullName evidence="1">Glutamine amidotransferase</fullName>
    </alternativeName>
</protein>
<dbReference type="EC" id="6.3.5.2" evidence="1"/>
<dbReference type="EMBL" id="AE016877">
    <property type="protein sequence ID" value="AAP07348.1"/>
    <property type="molecule type" value="Genomic_DNA"/>
</dbReference>
<dbReference type="RefSeq" id="NP_830147.1">
    <property type="nucleotide sequence ID" value="NC_004722.1"/>
</dbReference>
<dbReference type="SMR" id="Q81IS3"/>
<dbReference type="STRING" id="226900.BC_0296"/>
<dbReference type="MEROPS" id="C26.957"/>
<dbReference type="MetOSite" id="Q81IS3"/>
<dbReference type="KEGG" id="bce:BC0296"/>
<dbReference type="PATRIC" id="fig|226900.8.peg.280"/>
<dbReference type="HOGENOM" id="CLU_014340_0_5_9"/>
<dbReference type="UniPathway" id="UPA00189">
    <property type="reaction ID" value="UER00296"/>
</dbReference>
<dbReference type="Proteomes" id="UP000001417">
    <property type="component" value="Chromosome"/>
</dbReference>
<dbReference type="GO" id="GO:0005829">
    <property type="term" value="C:cytosol"/>
    <property type="evidence" value="ECO:0000318"/>
    <property type="project" value="GO_Central"/>
</dbReference>
<dbReference type="GO" id="GO:0005524">
    <property type="term" value="F:ATP binding"/>
    <property type="evidence" value="ECO:0007669"/>
    <property type="project" value="UniProtKB-UniRule"/>
</dbReference>
<dbReference type="GO" id="GO:0003921">
    <property type="term" value="F:GMP synthase activity"/>
    <property type="evidence" value="ECO:0000318"/>
    <property type="project" value="GO_Central"/>
</dbReference>
<dbReference type="GO" id="GO:0006177">
    <property type="term" value="P:GMP biosynthetic process"/>
    <property type="evidence" value="ECO:0000318"/>
    <property type="project" value="GO_Central"/>
</dbReference>
<dbReference type="CDD" id="cd01742">
    <property type="entry name" value="GATase1_GMP_Synthase"/>
    <property type="match status" value="1"/>
</dbReference>
<dbReference type="CDD" id="cd01997">
    <property type="entry name" value="GMP_synthase_C"/>
    <property type="match status" value="1"/>
</dbReference>
<dbReference type="FunFam" id="3.30.300.10:FF:000002">
    <property type="entry name" value="GMP synthase [glutamine-hydrolyzing]"/>
    <property type="match status" value="1"/>
</dbReference>
<dbReference type="FunFam" id="3.40.50.620:FF:000001">
    <property type="entry name" value="GMP synthase [glutamine-hydrolyzing]"/>
    <property type="match status" value="1"/>
</dbReference>
<dbReference type="FunFam" id="3.40.50.880:FF:000001">
    <property type="entry name" value="GMP synthase [glutamine-hydrolyzing]"/>
    <property type="match status" value="1"/>
</dbReference>
<dbReference type="Gene3D" id="3.30.300.10">
    <property type="match status" value="1"/>
</dbReference>
<dbReference type="Gene3D" id="3.40.50.880">
    <property type="match status" value="1"/>
</dbReference>
<dbReference type="Gene3D" id="3.40.50.620">
    <property type="entry name" value="HUPs"/>
    <property type="match status" value="1"/>
</dbReference>
<dbReference type="HAMAP" id="MF_00344">
    <property type="entry name" value="GMP_synthase"/>
    <property type="match status" value="1"/>
</dbReference>
<dbReference type="InterPro" id="IPR029062">
    <property type="entry name" value="Class_I_gatase-like"/>
</dbReference>
<dbReference type="InterPro" id="IPR017926">
    <property type="entry name" value="GATASE"/>
</dbReference>
<dbReference type="InterPro" id="IPR001674">
    <property type="entry name" value="GMP_synth_C"/>
</dbReference>
<dbReference type="InterPro" id="IPR004739">
    <property type="entry name" value="GMP_synth_GATase"/>
</dbReference>
<dbReference type="InterPro" id="IPR022955">
    <property type="entry name" value="GMP_synthase"/>
</dbReference>
<dbReference type="InterPro" id="IPR025777">
    <property type="entry name" value="GMPS_ATP_PPase_dom"/>
</dbReference>
<dbReference type="InterPro" id="IPR022310">
    <property type="entry name" value="NAD/GMP_synthase"/>
</dbReference>
<dbReference type="InterPro" id="IPR014729">
    <property type="entry name" value="Rossmann-like_a/b/a_fold"/>
</dbReference>
<dbReference type="NCBIfam" id="TIGR00884">
    <property type="entry name" value="guaA_Cterm"/>
    <property type="match status" value="1"/>
</dbReference>
<dbReference type="NCBIfam" id="TIGR00888">
    <property type="entry name" value="guaA_Nterm"/>
    <property type="match status" value="1"/>
</dbReference>
<dbReference type="NCBIfam" id="NF000848">
    <property type="entry name" value="PRK00074.1"/>
    <property type="match status" value="1"/>
</dbReference>
<dbReference type="PANTHER" id="PTHR11922:SF2">
    <property type="entry name" value="GMP SYNTHASE [GLUTAMINE-HYDROLYZING]"/>
    <property type="match status" value="1"/>
</dbReference>
<dbReference type="PANTHER" id="PTHR11922">
    <property type="entry name" value="GMP SYNTHASE-RELATED"/>
    <property type="match status" value="1"/>
</dbReference>
<dbReference type="Pfam" id="PF00117">
    <property type="entry name" value="GATase"/>
    <property type="match status" value="1"/>
</dbReference>
<dbReference type="Pfam" id="PF00958">
    <property type="entry name" value="GMP_synt_C"/>
    <property type="match status" value="1"/>
</dbReference>
<dbReference type="Pfam" id="PF02540">
    <property type="entry name" value="NAD_synthase"/>
    <property type="match status" value="1"/>
</dbReference>
<dbReference type="PRINTS" id="PR00097">
    <property type="entry name" value="ANTSNTHASEII"/>
</dbReference>
<dbReference type="PRINTS" id="PR00099">
    <property type="entry name" value="CPSGATASE"/>
</dbReference>
<dbReference type="PRINTS" id="PR00096">
    <property type="entry name" value="GATASE"/>
</dbReference>
<dbReference type="SUPFAM" id="SSF52402">
    <property type="entry name" value="Adenine nucleotide alpha hydrolases-like"/>
    <property type="match status" value="1"/>
</dbReference>
<dbReference type="SUPFAM" id="SSF52317">
    <property type="entry name" value="Class I glutamine amidotransferase-like"/>
    <property type="match status" value="1"/>
</dbReference>
<dbReference type="SUPFAM" id="SSF54810">
    <property type="entry name" value="GMP synthetase C-terminal dimerisation domain"/>
    <property type="match status" value="1"/>
</dbReference>
<dbReference type="PROSITE" id="PS51273">
    <property type="entry name" value="GATASE_TYPE_1"/>
    <property type="match status" value="1"/>
</dbReference>
<dbReference type="PROSITE" id="PS51553">
    <property type="entry name" value="GMPS_ATP_PPASE"/>
    <property type="match status" value="1"/>
</dbReference>
<reference key="1">
    <citation type="journal article" date="2003" name="Nature">
        <title>Genome sequence of Bacillus cereus and comparative analysis with Bacillus anthracis.</title>
        <authorList>
            <person name="Ivanova N."/>
            <person name="Sorokin A."/>
            <person name="Anderson I."/>
            <person name="Galleron N."/>
            <person name="Candelon B."/>
            <person name="Kapatral V."/>
            <person name="Bhattacharyya A."/>
            <person name="Reznik G."/>
            <person name="Mikhailova N."/>
            <person name="Lapidus A."/>
            <person name="Chu L."/>
            <person name="Mazur M."/>
            <person name="Goltsman E."/>
            <person name="Larsen N."/>
            <person name="D'Souza M."/>
            <person name="Walunas T."/>
            <person name="Grechkin Y."/>
            <person name="Pusch G."/>
            <person name="Haselkorn R."/>
            <person name="Fonstein M."/>
            <person name="Ehrlich S.D."/>
            <person name="Overbeek R."/>
            <person name="Kyrpides N.C."/>
        </authorList>
    </citation>
    <scope>NUCLEOTIDE SEQUENCE [LARGE SCALE GENOMIC DNA]</scope>
    <source>
        <strain>ATCC 14579 / DSM 31 / CCUG 7414 / JCM 2152 / NBRC 15305 / NCIMB 9373 / NCTC 2599 / NRRL B-3711</strain>
    </source>
</reference>
<proteinExistence type="inferred from homology"/>
<keyword id="KW-0067">ATP-binding</keyword>
<keyword id="KW-0315">Glutamine amidotransferase</keyword>
<keyword id="KW-0332">GMP biosynthesis</keyword>
<keyword id="KW-0436">Ligase</keyword>
<keyword id="KW-0547">Nucleotide-binding</keyword>
<keyword id="KW-0658">Purine biosynthesis</keyword>
<keyword id="KW-1185">Reference proteome</keyword>
<accession>Q81IS3</accession>
<comment type="function">
    <text evidence="1">Catalyzes the synthesis of GMP from XMP.</text>
</comment>
<comment type="catalytic activity">
    <reaction evidence="1">
        <text>XMP + L-glutamine + ATP + H2O = GMP + L-glutamate + AMP + diphosphate + 2 H(+)</text>
        <dbReference type="Rhea" id="RHEA:11680"/>
        <dbReference type="ChEBI" id="CHEBI:15377"/>
        <dbReference type="ChEBI" id="CHEBI:15378"/>
        <dbReference type="ChEBI" id="CHEBI:29985"/>
        <dbReference type="ChEBI" id="CHEBI:30616"/>
        <dbReference type="ChEBI" id="CHEBI:33019"/>
        <dbReference type="ChEBI" id="CHEBI:57464"/>
        <dbReference type="ChEBI" id="CHEBI:58115"/>
        <dbReference type="ChEBI" id="CHEBI:58359"/>
        <dbReference type="ChEBI" id="CHEBI:456215"/>
        <dbReference type="EC" id="6.3.5.2"/>
    </reaction>
</comment>
<comment type="pathway">
    <text evidence="1">Purine metabolism; GMP biosynthesis; GMP from XMP (L-Gln route): step 1/1.</text>
</comment>
<comment type="subunit">
    <text evidence="1">Homodimer.</text>
</comment>
<sequence>MIILKKQHDTIIVLDFGSQYNQLIARRIREFGVYSELHPHTITAEEIKAMNPKGIIFSGGPNSVYGEGALHCDEKIFELGLPIFGICYGMQLMTQQFGGKVERANHREYGKAVLKVENESKLYANLPEEQVVWMSHGDLVTGLPEGFVVDATSESCPIAGMSNEAKNLYGVQFHPEVRHSEHGNDLIKNFVFGVCGCSEGWNMENFIEVELEKIRETVGDKKVLCALSGGVDSSVVAVLIHKAIGDQLTCIFVDHGLLRKGEAEGVMKTFSEGFHMNVIKVDARDRFMDKLKGVEDPEQKRKIIGNEFIYVFDDEASKLQGMDFLAQGTLYTDIVESGTATAQTIKSHHNVGGLPEDMQFKLIEPLNTLFKDEVRVLGSELGIPDEIVWRQPFPGPGLGIRVLGEITEEKLEIVRESDAILREEIIKAGLDREIWQYFTALPGMRSVGVMGDERTYDYTVGIRAVTSIDGMTADWARIPWDVLEKISVRIVNEVKHVNRIVYDVTSKPPATIEWE</sequence>
<name>GUAA_BACCR</name>
<feature type="chain" id="PRO_0000140091" description="GMP synthase [glutamine-hydrolyzing]">
    <location>
        <begin position="1"/>
        <end position="515"/>
    </location>
</feature>
<feature type="domain" description="Glutamine amidotransferase type-1" evidence="1">
    <location>
        <begin position="10"/>
        <end position="200"/>
    </location>
</feature>
<feature type="domain" description="GMPS ATP-PPase" evidence="1">
    <location>
        <begin position="201"/>
        <end position="390"/>
    </location>
</feature>
<feature type="active site" description="Nucleophile" evidence="1">
    <location>
        <position position="87"/>
    </location>
</feature>
<feature type="active site" evidence="1">
    <location>
        <position position="174"/>
    </location>
</feature>
<feature type="active site" evidence="1">
    <location>
        <position position="176"/>
    </location>
</feature>
<feature type="binding site" evidence="1">
    <location>
        <begin position="228"/>
        <end position="234"/>
    </location>
    <ligand>
        <name>ATP</name>
        <dbReference type="ChEBI" id="CHEBI:30616"/>
    </ligand>
</feature>
<gene>
    <name evidence="1" type="primary">guaA</name>
    <name type="ordered locus">BC_0296</name>
</gene>
<organism>
    <name type="scientific">Bacillus cereus (strain ATCC 14579 / DSM 31 / CCUG 7414 / JCM 2152 / NBRC 15305 / NCIMB 9373 / NCTC 2599 / NRRL B-3711)</name>
    <dbReference type="NCBI Taxonomy" id="226900"/>
    <lineage>
        <taxon>Bacteria</taxon>
        <taxon>Bacillati</taxon>
        <taxon>Bacillota</taxon>
        <taxon>Bacilli</taxon>
        <taxon>Bacillales</taxon>
        <taxon>Bacillaceae</taxon>
        <taxon>Bacillus</taxon>
        <taxon>Bacillus cereus group</taxon>
    </lineage>
</organism>